<reference key="1">
    <citation type="journal article" date="2003" name="Nature">
        <title>The genome sequence of Bacillus anthracis Ames and comparison to closely related bacteria.</title>
        <authorList>
            <person name="Read T.D."/>
            <person name="Peterson S.N."/>
            <person name="Tourasse N.J."/>
            <person name="Baillie L.W."/>
            <person name="Paulsen I.T."/>
            <person name="Nelson K.E."/>
            <person name="Tettelin H."/>
            <person name="Fouts D.E."/>
            <person name="Eisen J.A."/>
            <person name="Gill S.R."/>
            <person name="Holtzapple E.K."/>
            <person name="Okstad O.A."/>
            <person name="Helgason E."/>
            <person name="Rilstone J."/>
            <person name="Wu M."/>
            <person name="Kolonay J.F."/>
            <person name="Beanan M.J."/>
            <person name="Dodson R.J."/>
            <person name="Brinkac L.M."/>
            <person name="Gwinn M.L."/>
            <person name="DeBoy R.T."/>
            <person name="Madpu R."/>
            <person name="Daugherty S.C."/>
            <person name="Durkin A.S."/>
            <person name="Haft D.H."/>
            <person name="Nelson W.C."/>
            <person name="Peterson J.D."/>
            <person name="Pop M."/>
            <person name="Khouri H.M."/>
            <person name="Radune D."/>
            <person name="Benton J.L."/>
            <person name="Mahamoud Y."/>
            <person name="Jiang L."/>
            <person name="Hance I.R."/>
            <person name="Weidman J.F."/>
            <person name="Berry K.J."/>
            <person name="Plaut R.D."/>
            <person name="Wolf A.M."/>
            <person name="Watkins K.L."/>
            <person name="Nierman W.C."/>
            <person name="Hazen A."/>
            <person name="Cline R.T."/>
            <person name="Redmond C."/>
            <person name="Thwaite J.E."/>
            <person name="White O."/>
            <person name="Salzberg S.L."/>
            <person name="Thomason B."/>
            <person name="Friedlander A.M."/>
            <person name="Koehler T.M."/>
            <person name="Hanna P.C."/>
            <person name="Kolstoe A.-B."/>
            <person name="Fraser C.M."/>
        </authorList>
    </citation>
    <scope>NUCLEOTIDE SEQUENCE [LARGE SCALE GENOMIC DNA]</scope>
    <source>
        <strain>Ames / isolate Porton</strain>
    </source>
</reference>
<reference key="2">
    <citation type="submission" date="2004-01" db="EMBL/GenBank/DDBJ databases">
        <title>Complete genome sequence of Bacillus anthracis Sterne.</title>
        <authorList>
            <person name="Brettin T.S."/>
            <person name="Bruce D."/>
            <person name="Challacombe J.F."/>
            <person name="Gilna P."/>
            <person name="Han C."/>
            <person name="Hill K."/>
            <person name="Hitchcock P."/>
            <person name="Jackson P."/>
            <person name="Keim P."/>
            <person name="Longmire J."/>
            <person name="Lucas S."/>
            <person name="Okinaka R."/>
            <person name="Richardson P."/>
            <person name="Rubin E."/>
            <person name="Tice H."/>
        </authorList>
    </citation>
    <scope>NUCLEOTIDE SEQUENCE [LARGE SCALE GENOMIC DNA]</scope>
    <source>
        <strain>Sterne</strain>
    </source>
</reference>
<reference key="3">
    <citation type="journal article" date="2009" name="J. Bacteriol.">
        <title>The complete genome sequence of Bacillus anthracis Ames 'Ancestor'.</title>
        <authorList>
            <person name="Ravel J."/>
            <person name="Jiang L."/>
            <person name="Stanley S.T."/>
            <person name="Wilson M.R."/>
            <person name="Decker R.S."/>
            <person name="Read T.D."/>
            <person name="Worsham P."/>
            <person name="Keim P.S."/>
            <person name="Salzberg S.L."/>
            <person name="Fraser-Liggett C.M."/>
            <person name="Rasko D.A."/>
        </authorList>
    </citation>
    <scope>NUCLEOTIDE SEQUENCE [LARGE SCALE GENOMIC DNA]</scope>
    <source>
        <strain>Ames ancestor</strain>
    </source>
</reference>
<keyword id="KW-1185">Reference proteome</keyword>
<comment type="function">
    <text evidence="1">Is involved in L-lactate degradation and allows cells to grow with lactate as the sole carbon source.</text>
</comment>
<comment type="similarity">
    <text evidence="1">Belongs to the LutC/YkgG family.</text>
</comment>
<organism>
    <name type="scientific">Bacillus anthracis</name>
    <dbReference type="NCBI Taxonomy" id="1392"/>
    <lineage>
        <taxon>Bacteria</taxon>
        <taxon>Bacillati</taxon>
        <taxon>Bacillota</taxon>
        <taxon>Bacilli</taxon>
        <taxon>Bacillales</taxon>
        <taxon>Bacillaceae</taxon>
        <taxon>Bacillus</taxon>
        <taxon>Bacillus cereus group</taxon>
    </lineage>
</organism>
<evidence type="ECO:0000255" key="1">
    <source>
        <dbReference type="HAMAP-Rule" id="MF_02104"/>
    </source>
</evidence>
<feature type="chain" id="PRO_0000383992" description="Lactate utilization protein C">
    <location>
        <begin position="1"/>
        <end position="236"/>
    </location>
</feature>
<sequence length="236" mass="26599">MTGLIQNRDSFLDNIAKELGRTRKTDGVERPVWKNNVNKETLKDYSQEELLEVFKNQCTNIHTTVVETTNDRLREDIQKVIVENGGGPIMLSADERFDSYGLTSLFKEELPKQNVEVNVWDPEKKEENMRIAERANIGIAFSDYTLAESGTIVVQSHKGQGRSLHFLPTVYFAIIPRETLVPRITQAVQDMNTRVENGEEVASCINFITGPSNSADIEMNLVVGVHGPLKAVYFIV</sequence>
<name>LUTC_BACAN</name>
<proteinExistence type="inferred from homology"/>
<gene>
    <name evidence="1" type="primary">lutC</name>
    <name type="ordered locus">BA_1317</name>
    <name type="ordered locus">GBAA_1317</name>
    <name type="ordered locus">BAS1218</name>
</gene>
<dbReference type="EMBL" id="AE016879">
    <property type="protein sequence ID" value="AAP25269.1"/>
    <property type="molecule type" value="Genomic_DNA"/>
</dbReference>
<dbReference type="EMBL" id="AE017334">
    <property type="protein sequence ID" value="AAT30406.1"/>
    <property type="molecule type" value="Genomic_DNA"/>
</dbReference>
<dbReference type="EMBL" id="AE017225">
    <property type="protein sequence ID" value="AAT53539.1"/>
    <property type="molecule type" value="Genomic_DNA"/>
</dbReference>
<dbReference type="RefSeq" id="NP_843783.1">
    <property type="nucleotide sequence ID" value="NC_003997.3"/>
</dbReference>
<dbReference type="RefSeq" id="WP_000147197.1">
    <property type="nucleotide sequence ID" value="NZ_WXXJ01000029.1"/>
</dbReference>
<dbReference type="RefSeq" id="YP_027488.1">
    <property type="nucleotide sequence ID" value="NC_005945.1"/>
</dbReference>
<dbReference type="SMR" id="Q81TG0"/>
<dbReference type="STRING" id="261594.GBAA_1317"/>
<dbReference type="DNASU" id="1087448"/>
<dbReference type="GeneID" id="45021311"/>
<dbReference type="KEGG" id="ban:BA_1317"/>
<dbReference type="KEGG" id="bar:GBAA_1317"/>
<dbReference type="KEGG" id="bat:BAS1218"/>
<dbReference type="PATRIC" id="fig|198094.11.peg.1289"/>
<dbReference type="eggNOG" id="COG1556">
    <property type="taxonomic scope" value="Bacteria"/>
</dbReference>
<dbReference type="HOGENOM" id="CLU_090664_1_0_9"/>
<dbReference type="OMA" id="MPSCVNI"/>
<dbReference type="OrthoDB" id="9794157at2"/>
<dbReference type="Proteomes" id="UP000000427">
    <property type="component" value="Chromosome"/>
</dbReference>
<dbReference type="Proteomes" id="UP000000594">
    <property type="component" value="Chromosome"/>
</dbReference>
<dbReference type="GO" id="GO:0006089">
    <property type="term" value="P:lactate metabolic process"/>
    <property type="evidence" value="ECO:0007669"/>
    <property type="project" value="UniProtKB-UniRule"/>
</dbReference>
<dbReference type="Gene3D" id="3.40.50.10420">
    <property type="entry name" value="NagB/RpiA/CoA transferase-like"/>
    <property type="match status" value="1"/>
</dbReference>
<dbReference type="HAMAP" id="MF_02104">
    <property type="entry name" value="LutC"/>
    <property type="match status" value="1"/>
</dbReference>
<dbReference type="InterPro" id="IPR024185">
    <property type="entry name" value="FTHF_cligase-like_sf"/>
</dbReference>
<dbReference type="InterPro" id="IPR003741">
    <property type="entry name" value="LUD_dom"/>
</dbReference>
<dbReference type="InterPro" id="IPR022823">
    <property type="entry name" value="LutC"/>
</dbReference>
<dbReference type="InterPro" id="IPR037171">
    <property type="entry name" value="NagB/RpiA_transferase-like"/>
</dbReference>
<dbReference type="PANTHER" id="PTHR43682">
    <property type="entry name" value="LACTATE UTILIZATION PROTEIN C"/>
    <property type="match status" value="1"/>
</dbReference>
<dbReference type="PANTHER" id="PTHR43682:SF1">
    <property type="entry name" value="LACTATE UTILIZATION PROTEIN C"/>
    <property type="match status" value="1"/>
</dbReference>
<dbReference type="Pfam" id="PF02589">
    <property type="entry name" value="LUD_dom"/>
    <property type="match status" value="1"/>
</dbReference>
<dbReference type="SUPFAM" id="SSF100950">
    <property type="entry name" value="NagB/RpiA/CoA transferase-like"/>
    <property type="match status" value="1"/>
</dbReference>
<protein>
    <recommendedName>
        <fullName evidence="1">Lactate utilization protein C</fullName>
    </recommendedName>
</protein>
<accession>Q81TG0</accession>
<accession>Q6I1P2</accession>
<accession>Q6KVI5</accession>